<organism>
    <name type="scientific">Acanthamoeba polyphaga mimivirus</name>
    <name type="common">APMV</name>
    <dbReference type="NCBI Taxonomy" id="212035"/>
    <lineage>
        <taxon>Viruses</taxon>
        <taxon>Varidnaviria</taxon>
        <taxon>Bamfordvirae</taxon>
        <taxon>Nucleocytoviricota</taxon>
        <taxon>Megaviricetes</taxon>
        <taxon>Imitervirales</taxon>
        <taxon>Mimiviridae</taxon>
        <taxon>Megamimivirinae</taxon>
        <taxon>Mimivirus</taxon>
        <taxon>Mimivirus bradfordmassiliense</taxon>
    </lineage>
</organism>
<accession>Q5UQC8</accession>
<feature type="chain" id="PRO_0000071287" description="Uncharacterized protein L461">
    <location>
        <begin position="1"/>
        <end position="209"/>
    </location>
</feature>
<protein>
    <recommendedName>
        <fullName>Uncharacterized protein L461</fullName>
    </recommendedName>
</protein>
<name>YL461_MIMIV</name>
<keyword id="KW-1185">Reference proteome</keyword>
<dbReference type="EMBL" id="AY653733">
    <property type="protein sequence ID" value="AAV50727.1"/>
    <property type="molecule type" value="Genomic_DNA"/>
</dbReference>
<dbReference type="KEGG" id="vg:9925086"/>
<dbReference type="OrthoDB" id="19570at10239"/>
<dbReference type="Proteomes" id="UP000001134">
    <property type="component" value="Genome"/>
</dbReference>
<reference key="1">
    <citation type="journal article" date="2004" name="Science">
        <title>The 1.2-megabase genome sequence of Mimivirus.</title>
        <authorList>
            <person name="Raoult D."/>
            <person name="Audic S."/>
            <person name="Robert C."/>
            <person name="Abergel C."/>
            <person name="Renesto P."/>
            <person name="Ogata H."/>
            <person name="La Scola B."/>
            <person name="Susan M."/>
            <person name="Claverie J.-M."/>
        </authorList>
    </citation>
    <scope>NUCLEOTIDE SEQUENCE [LARGE SCALE GENOMIC DNA]</scope>
    <source>
        <strain>Rowbotham-Bradford</strain>
    </source>
</reference>
<gene>
    <name type="ordered locus">MIMI_L461</name>
</gene>
<organismHost>
    <name type="scientific">Acanthamoeba polyphaga</name>
    <name type="common">Amoeba</name>
    <dbReference type="NCBI Taxonomy" id="5757"/>
</organismHost>
<proteinExistence type="predicted"/>
<sequence>MNNYNILYFSNKCQASHQLLAMFDREKLTTFFYKICVDNNPNIPKQIRVTPTFIIRGVPFLYEGATAFAWLNKVKQYKYCMMMQQMGQKQQQYLQNMIGNTTSGSDMSVLGFSQTEMNGMSDIFSFFSKNIEQECQDALPQTFVPCKDIAKYEIFTPPLENGKYKIDKSSKIDPKKQKELELNLEAQRKKQDLLFKQSIDSFKNSTFDD</sequence>